<keyword id="KW-0002">3D-structure</keyword>
<keyword id="KW-0007">Acetylation</keyword>
<keyword id="KW-0963">Cytoplasm</keyword>
<keyword id="KW-0903">Direct protein sequencing</keyword>
<keyword id="KW-0413">Isomerase</keyword>
<keyword id="KW-0472">Membrane</keyword>
<keyword id="KW-1267">Proteomics identification</keyword>
<keyword id="KW-1185">Reference proteome</keyword>
<keyword id="KW-0697">Rotamase</keyword>
<keyword id="KW-0703">Sarcoplasmic reticulum</keyword>
<comment type="function">
    <text evidence="7 8 9 13">Keeps in an inactive conformation TGFBR1, the TGF-beta type I serine/threonine kinase receptor, preventing TGF-beta receptor activation in absence of ligand. Recruits SMAD7 to ACVR1B which prevents the association of SMAD2 and SMAD3 with the activin receptor complex, thereby blocking the activin signal. May modulate the RYR1 calcium channel activity. PPIases accelerate the folding of proteins. It catalyzes the cis-trans isomerization of proline imidic peptide bonds in oligopeptides.</text>
</comment>
<comment type="catalytic activity">
    <reaction evidence="8 9">
        <text>[protein]-peptidylproline (omega=180) = [protein]-peptidylproline (omega=0)</text>
        <dbReference type="Rhea" id="RHEA:16237"/>
        <dbReference type="Rhea" id="RHEA-COMP:10747"/>
        <dbReference type="Rhea" id="RHEA-COMP:10748"/>
        <dbReference type="ChEBI" id="CHEBI:83833"/>
        <dbReference type="ChEBI" id="CHEBI:83834"/>
        <dbReference type="EC" id="5.2.1.8"/>
    </reaction>
</comment>
<comment type="activity regulation">
    <text>Inhibited by both FK506 and rapamycin.</text>
</comment>
<comment type="subunit">
    <text evidence="1 2 4 5 7 10 12 13">Interacts with TGFBR1; prevents TGFBR1 phosphorylation by TGFBR2 and stabilizes it in the inactive conformation (PubMed:9233797). Interacts with ACVR1B and SMAD7 (PubMed:16720724). Identified in a complex composed of RYR1, PDE4D, PKA, FKBP1A and protein phosphatase 1 (PP1) (By similarity). Interacts directly with RYR2 and RYR3 (PubMed:10358090, PubMed:22100703). Interacts with GLMN; rapamycin and FK506 abolish the interaction with GLMN in a dose dependent manner (PubMed:8955134). Interacts directly with RYR1 (By similarity).</text>
</comment>
<comment type="interaction">
    <interactant intactId="EBI-1027571">
        <id>P62942</id>
    </interactant>
    <interactant intactId="EBI-1384128">
        <id>P36896</id>
        <label>ACVR1B</label>
    </interactant>
    <organismsDiffer>false</organismsDiffer>
    <experiments>2</experiments>
</comment>
<comment type="interaction">
    <interactant intactId="EBI-1027571">
        <id>P62942</id>
    </interactant>
    <interactant intactId="EBI-720250">
        <id>Q9NZD4</id>
        <label>AHSP</label>
    </interactant>
    <organismsDiffer>false</organismsDiffer>
    <experiments>3</experiments>
</comment>
<comment type="interaction">
    <interactant intactId="EBI-1027571">
        <id>P62942</id>
    </interactant>
    <interactant intactId="EBI-77613">
        <id>P05067</id>
        <label>APP</label>
    </interactant>
    <organismsDiffer>false</organismsDiffer>
    <experiments>3</experiments>
</comment>
<comment type="interaction">
    <interactant intactId="EBI-1027571">
        <id>P62942</id>
    </interactant>
    <interactant intactId="EBI-359260">
        <id>P42345</id>
        <label>MTOR</label>
    </interactant>
    <organismsDiffer>false</organismsDiffer>
    <experiments>5</experiments>
</comment>
<comment type="interaction">
    <interactant intactId="EBI-1027571">
        <id>P62942</id>
    </interactant>
    <interactant intactId="EBI-1170425">
        <id>Q92736</id>
        <label>RYR2</label>
    </interactant>
    <organismsDiffer>false</organismsDiffer>
    <experiments>2</experiments>
</comment>
<comment type="interaction">
    <interactant intactId="EBI-1027571">
        <id>P62942</id>
    </interactant>
    <interactant intactId="EBI-3861591">
        <id>O15105</id>
        <label>SMAD7</label>
    </interactant>
    <organismsDiffer>false</organismsDiffer>
    <experiments>3</experiments>
</comment>
<comment type="interaction">
    <interactant intactId="EBI-1027571">
        <id>P62942</id>
    </interactant>
    <interactant intactId="EBI-1027557">
        <id>P36897</id>
        <label>TGFBR1</label>
    </interactant>
    <organismsDiffer>false</organismsDiffer>
    <experiments>2</experiments>
</comment>
<comment type="interaction">
    <interactant intactId="EBI-1027571">
        <id>P62942</id>
    </interactant>
    <interactant intactId="EBI-25475797">
        <id>PRO_0000037309</id>
        <label>rep</label>
        <dbReference type="UniProtKB" id="P0C6X7"/>
    </interactant>
    <organismsDiffer>true</organismsDiffer>
    <experiments>4</experiments>
</comment>
<comment type="interaction">
    <interactant intactId="EBI-1027571">
        <id>P62942</id>
    </interactant>
    <interactant intactId="EBI-25487250">
        <id>PRO_0000037312</id>
        <label>rep</label>
        <dbReference type="UniProtKB" id="P0C6X7"/>
    </interactant>
    <organismsDiffer>true</organismsDiffer>
    <experiments>2</experiments>
</comment>
<comment type="interaction">
    <interactant intactId="EBI-1027571">
        <id>P62942</id>
    </interactant>
    <interactant intactId="EBI-6477441">
        <id>P11716</id>
        <label>RYR1</label>
    </interactant>
    <organismsDiffer>true</organismsDiffer>
    <experiments>2</experiments>
</comment>
<comment type="subcellular location">
    <subcellularLocation>
        <location evidence="9">Cytoplasm</location>
        <location evidence="9">Cytosol</location>
    </subcellularLocation>
    <subcellularLocation>
        <location evidence="2">Sarcoplasmic reticulum membrane</location>
        <topology evidence="2">Peripheral membrane protein</topology>
        <orientation evidence="2">Cytoplasmic side</orientation>
    </subcellularLocation>
</comment>
<comment type="similarity">
    <text evidence="14">Belongs to the FKBP-type PPIase family. FKBP1 subfamily.</text>
</comment>
<proteinExistence type="evidence at protein level"/>
<organism>
    <name type="scientific">Homo sapiens</name>
    <name type="common">Human</name>
    <dbReference type="NCBI Taxonomy" id="9606"/>
    <lineage>
        <taxon>Eukaryota</taxon>
        <taxon>Metazoa</taxon>
        <taxon>Chordata</taxon>
        <taxon>Craniata</taxon>
        <taxon>Vertebrata</taxon>
        <taxon>Euteleostomi</taxon>
        <taxon>Mammalia</taxon>
        <taxon>Eutheria</taxon>
        <taxon>Euarchontoglires</taxon>
        <taxon>Primates</taxon>
        <taxon>Haplorrhini</taxon>
        <taxon>Catarrhini</taxon>
        <taxon>Hominidae</taxon>
        <taxon>Homo</taxon>
    </lineage>
</organism>
<sequence>MGVQVETISPGDGRTFPKRGQTCVVHYTGMLEDGKKFDSSRDRNKPFKFMLGKQEVIRGWEEGVAQMSVGQRAKLTISPDYAYGATGHPGIIPPHATLVFDVELLKLE</sequence>
<reference key="1">
    <citation type="journal article" date="1990" name="Proc. Natl. Acad. Sci. U.S.A.">
        <title>Complementary DNA encoding the human T-cell FK506-binding protein, a peptidylprolyl cis-trans isomerase distinct from cyclophilin.</title>
        <authorList>
            <person name="Maki N."/>
            <person name="Sekiguchi F."/>
            <person name="Nishimaki J."/>
            <person name="Miwa K."/>
            <person name="Hayano T."/>
            <person name="Takahashi N."/>
            <person name="Suzuki M."/>
        </authorList>
    </citation>
    <scope>NUCLEOTIDE SEQUENCE [MRNA]</scope>
</reference>
<reference key="2">
    <citation type="journal article" date="1990" name="Nature">
        <title>Molecular cloning and overexpression of the human FK506-binding protein FKBP.</title>
        <authorList>
            <person name="Standaert R.F."/>
            <person name="Galat A."/>
            <person name="Verdine G.L."/>
            <person name="Schreiber S.L."/>
        </authorList>
    </citation>
    <scope>NUCLEOTIDE SEQUENCE [GENOMIC DNA]</scope>
    <scope>CATALYTIC ACTIVITY</scope>
    <scope>FUNCTION</scope>
</reference>
<reference key="3">
    <citation type="journal article" date="1991" name="Biochemistry">
        <title>Exon organization of the human FKBP-12 gene: correlation with structural and functional protein domains.</title>
        <authorList>
            <person name="Dilella A.G."/>
            <person name="Craig R.J."/>
        </authorList>
    </citation>
    <scope>NUCLEOTIDE SEQUENCE [GENOMIC DNA]</scope>
</reference>
<reference key="4">
    <citation type="journal article" date="1994" name="Gene">
        <title>Three distinct messenger RNAs can encode the human immunosuppressant-binding protein FKBP12.</title>
        <authorList>
            <person name="Peattie D.A."/>
            <person name="Hsiao K."/>
            <person name="Benasutti M."/>
            <person name="Lippke J.A."/>
        </authorList>
    </citation>
    <scope>NUCLEOTIDE SEQUENCE [GENOMIC DNA / MRNA]</scope>
    <source>
        <tissue>Placenta</tissue>
    </source>
</reference>
<reference key="5">
    <citation type="submission" date="2003-05" db="EMBL/GenBank/DDBJ databases">
        <title>Cloning of human full-length CDSs in BD Creator(TM) system donor vector.</title>
        <authorList>
            <person name="Kalnine N."/>
            <person name="Chen X."/>
            <person name="Rolfs A."/>
            <person name="Halleck A."/>
            <person name="Hines L."/>
            <person name="Eisenstein S."/>
            <person name="Koundinya M."/>
            <person name="Raphael J."/>
            <person name="Moreira D."/>
            <person name="Kelley T."/>
            <person name="LaBaer J."/>
            <person name="Lin Y."/>
            <person name="Phelan M."/>
            <person name="Farmer A."/>
        </authorList>
    </citation>
    <scope>NUCLEOTIDE SEQUENCE [LARGE SCALE MRNA]</scope>
</reference>
<reference key="6">
    <citation type="submission" date="2004-06" db="EMBL/GenBank/DDBJ databases">
        <title>Cloning of human full open reading frames in Gateway(TM) system entry vector (pDONR201).</title>
        <authorList>
            <person name="Ebert L."/>
            <person name="Schick M."/>
            <person name="Neubert P."/>
            <person name="Schatten R."/>
            <person name="Henze S."/>
            <person name="Korn B."/>
        </authorList>
    </citation>
    <scope>NUCLEOTIDE SEQUENCE [LARGE SCALE MRNA]</scope>
</reference>
<reference key="7">
    <citation type="journal article" date="2001" name="Nature">
        <title>The DNA sequence and comparative analysis of human chromosome 20.</title>
        <authorList>
            <person name="Deloukas P."/>
            <person name="Matthews L.H."/>
            <person name="Ashurst J.L."/>
            <person name="Burton J."/>
            <person name="Gilbert J.G.R."/>
            <person name="Jones M."/>
            <person name="Stavrides G."/>
            <person name="Almeida J.P."/>
            <person name="Babbage A.K."/>
            <person name="Bagguley C.L."/>
            <person name="Bailey J."/>
            <person name="Barlow K.F."/>
            <person name="Bates K.N."/>
            <person name="Beard L.M."/>
            <person name="Beare D.M."/>
            <person name="Beasley O.P."/>
            <person name="Bird C.P."/>
            <person name="Blakey S.E."/>
            <person name="Bridgeman A.M."/>
            <person name="Brown A.J."/>
            <person name="Buck D."/>
            <person name="Burrill W.D."/>
            <person name="Butler A.P."/>
            <person name="Carder C."/>
            <person name="Carter N.P."/>
            <person name="Chapman J.C."/>
            <person name="Clamp M."/>
            <person name="Clark G."/>
            <person name="Clark L.N."/>
            <person name="Clark S.Y."/>
            <person name="Clee C.M."/>
            <person name="Clegg S."/>
            <person name="Cobley V.E."/>
            <person name="Collier R.E."/>
            <person name="Connor R.E."/>
            <person name="Corby N.R."/>
            <person name="Coulson A."/>
            <person name="Coville G.J."/>
            <person name="Deadman R."/>
            <person name="Dhami P.D."/>
            <person name="Dunn M."/>
            <person name="Ellington A.G."/>
            <person name="Frankland J.A."/>
            <person name="Fraser A."/>
            <person name="French L."/>
            <person name="Garner P."/>
            <person name="Grafham D.V."/>
            <person name="Griffiths C."/>
            <person name="Griffiths M.N.D."/>
            <person name="Gwilliam R."/>
            <person name="Hall R.E."/>
            <person name="Hammond S."/>
            <person name="Harley J.L."/>
            <person name="Heath P.D."/>
            <person name="Ho S."/>
            <person name="Holden J.L."/>
            <person name="Howden P.J."/>
            <person name="Huckle E."/>
            <person name="Hunt A.R."/>
            <person name="Hunt S.E."/>
            <person name="Jekosch K."/>
            <person name="Johnson C.M."/>
            <person name="Johnson D."/>
            <person name="Kay M.P."/>
            <person name="Kimberley A.M."/>
            <person name="King A."/>
            <person name="Knights A."/>
            <person name="Laird G.K."/>
            <person name="Lawlor S."/>
            <person name="Lehvaeslaiho M.H."/>
            <person name="Leversha M.A."/>
            <person name="Lloyd C."/>
            <person name="Lloyd D.M."/>
            <person name="Lovell J.D."/>
            <person name="Marsh V.L."/>
            <person name="Martin S.L."/>
            <person name="McConnachie L.J."/>
            <person name="McLay K."/>
            <person name="McMurray A.A."/>
            <person name="Milne S.A."/>
            <person name="Mistry D."/>
            <person name="Moore M.J.F."/>
            <person name="Mullikin J.C."/>
            <person name="Nickerson T."/>
            <person name="Oliver K."/>
            <person name="Parker A."/>
            <person name="Patel R."/>
            <person name="Pearce T.A.V."/>
            <person name="Peck A.I."/>
            <person name="Phillimore B.J.C.T."/>
            <person name="Prathalingam S.R."/>
            <person name="Plumb R.W."/>
            <person name="Ramsay H."/>
            <person name="Rice C.M."/>
            <person name="Ross M.T."/>
            <person name="Scott C.E."/>
            <person name="Sehra H.K."/>
            <person name="Shownkeen R."/>
            <person name="Sims S."/>
            <person name="Skuce C.D."/>
            <person name="Smith M.L."/>
            <person name="Soderlund C."/>
            <person name="Steward C.A."/>
            <person name="Sulston J.E."/>
            <person name="Swann R.M."/>
            <person name="Sycamore N."/>
            <person name="Taylor R."/>
            <person name="Tee L."/>
            <person name="Thomas D.W."/>
            <person name="Thorpe A."/>
            <person name="Tracey A."/>
            <person name="Tromans A.C."/>
            <person name="Vaudin M."/>
            <person name="Wall M."/>
            <person name="Wallis J.M."/>
            <person name="Whitehead S.L."/>
            <person name="Whittaker P."/>
            <person name="Willey D.L."/>
            <person name="Williams L."/>
            <person name="Williams S.A."/>
            <person name="Wilming L."/>
            <person name="Wray P.W."/>
            <person name="Hubbard T."/>
            <person name="Durbin R.M."/>
            <person name="Bentley D.R."/>
            <person name="Beck S."/>
            <person name="Rogers J."/>
        </authorList>
    </citation>
    <scope>NUCLEOTIDE SEQUENCE [LARGE SCALE GENOMIC DNA]</scope>
</reference>
<reference key="8">
    <citation type="submission" date="2005-09" db="EMBL/GenBank/DDBJ databases">
        <authorList>
            <person name="Mural R.J."/>
            <person name="Istrail S."/>
            <person name="Sutton G.G."/>
            <person name="Florea L."/>
            <person name="Halpern A.L."/>
            <person name="Mobarry C.M."/>
            <person name="Lippert R."/>
            <person name="Walenz B."/>
            <person name="Shatkay H."/>
            <person name="Dew I."/>
            <person name="Miller J.R."/>
            <person name="Flanigan M.J."/>
            <person name="Edwards N.J."/>
            <person name="Bolanos R."/>
            <person name="Fasulo D."/>
            <person name="Halldorsson B.V."/>
            <person name="Hannenhalli S."/>
            <person name="Turner R."/>
            <person name="Yooseph S."/>
            <person name="Lu F."/>
            <person name="Nusskern D.R."/>
            <person name="Shue B.C."/>
            <person name="Zheng X.H."/>
            <person name="Zhong F."/>
            <person name="Delcher A.L."/>
            <person name="Huson D.H."/>
            <person name="Kravitz S.A."/>
            <person name="Mouchard L."/>
            <person name="Reinert K."/>
            <person name="Remington K.A."/>
            <person name="Clark A.G."/>
            <person name="Waterman M.S."/>
            <person name="Eichler E.E."/>
            <person name="Adams M.D."/>
            <person name="Hunkapiller M.W."/>
            <person name="Myers E.W."/>
            <person name="Venter J.C."/>
        </authorList>
    </citation>
    <scope>NUCLEOTIDE SEQUENCE [LARGE SCALE GENOMIC DNA]</scope>
</reference>
<reference key="9">
    <citation type="journal article" date="2004" name="Genome Res.">
        <title>The status, quality, and expansion of the NIH full-length cDNA project: the Mammalian Gene Collection (MGC).</title>
        <authorList>
            <consortium name="The MGC Project Team"/>
        </authorList>
    </citation>
    <scope>NUCLEOTIDE SEQUENCE [LARGE SCALE MRNA]</scope>
    <source>
        <tissue>Lung</tissue>
        <tissue>Placenta</tissue>
    </source>
</reference>
<reference key="10">
    <citation type="journal article" date="1990" name="J. Biol. Chem.">
        <title>The cytosolic-binding protein for the immunosuppressant FK-506 is both a ubiquitous and highly conserved peptidyl-prolyl cis-trans isomerase.</title>
        <authorList>
            <person name="Siekierka J.J."/>
            <person name="Widerrecht G."/>
            <person name="Greulich H."/>
            <person name="Boulton D."/>
            <person name="Hung S.H.Y."/>
            <person name="Cryan J."/>
            <person name="Hodges P.J."/>
            <person name="Sigal N.H."/>
        </authorList>
    </citation>
    <scope>PROTEIN SEQUENCE OF 2-52</scope>
    <scope>FUNCTION</scope>
    <scope>CATALYTIC ACTIVITY</scope>
    <scope>SUBCELLULAR LOCATION</scope>
</reference>
<reference key="11">
    <citation type="journal article" date="1989" name="Nature">
        <title>A receptor for the immunosuppressant FK506 is a cis-trans peptidyl-prolyl isomerase.</title>
        <authorList>
            <person name="Harding M.W."/>
            <person name="Galat A."/>
            <person name="Uehling D.E."/>
            <person name="Schreiber S.L."/>
        </authorList>
    </citation>
    <scope>PROTEIN SEQUENCE OF 2-17</scope>
</reference>
<reference key="12">
    <citation type="journal article" date="2003" name="Nat. Biotechnol.">
        <title>Exploring proteomes and analyzing protein processing by mass spectrometric identification of sorted N-terminal peptides.</title>
        <authorList>
            <person name="Gevaert K."/>
            <person name="Goethals M."/>
            <person name="Martens L."/>
            <person name="Van Damme J."/>
            <person name="Staes A."/>
            <person name="Thomas G.R."/>
            <person name="Vandekerckhove J."/>
        </authorList>
    </citation>
    <scope>PROTEIN SEQUENCE OF 2-14</scope>
    <source>
        <tissue>Platelet</tissue>
    </source>
</reference>
<reference key="13">
    <citation type="journal article" date="1996" name="J. Biol. Chem.">
        <title>FAP48, a new protein that forms specific complexes with both immunophilins FKBP59 and FKBP12. Prevention by the immunosuppressant drugs FK506 and rapamycin.</title>
        <authorList>
            <person name="Chambraud B."/>
            <person name="Radanyi C."/>
            <person name="Camonis J.H."/>
            <person name="Shazand K."/>
            <person name="Rajkowski K."/>
            <person name="Baulieu E.-E."/>
        </authorList>
    </citation>
    <scope>INTERACTION WITH GLMN</scope>
</reference>
<reference key="14">
    <citation type="journal article" date="1997" name="EMBO J.">
        <title>Mechanism of TGFbeta receptor inhibition by FKBP12.</title>
        <authorList>
            <person name="Chen Y.G."/>
            <person name="Liu F."/>
            <person name="Massague J."/>
        </authorList>
    </citation>
    <scope>FUNCTION IN TGFBR1 INHIBITION</scope>
    <scope>INTERACTION WITH TGFBR1</scope>
</reference>
<reference key="15">
    <citation type="journal article" date="1999" name="J. Biol. Chem.">
        <title>Further characterization of the type 3 ryanodine receptor (RyR3) purified from rabbit diaphragm.</title>
        <authorList>
            <person name="Murayama T."/>
            <person name="Oba T."/>
            <person name="Katayama E."/>
            <person name="Oyamada H."/>
            <person name="Oguchi K."/>
            <person name="Kobayashi M."/>
            <person name="Otsuka K."/>
            <person name="Ogawa Y."/>
        </authorList>
    </citation>
    <scope>INTERACTION WITH RYR3</scope>
</reference>
<reference key="16">
    <citation type="journal article" date="2006" name="J. Mol. Endocrinol.">
        <title>FKBP12 functions as an adaptor of the Smad7-Smurf1 complex on activin type I receptor.</title>
        <authorList>
            <person name="Yamaguchi T."/>
            <person name="Kurisaki A."/>
            <person name="Yamakawa N."/>
            <person name="Minakuchi K."/>
            <person name="Sugino H."/>
        </authorList>
    </citation>
    <scope>INTERACTION WITH ACVR1B AND SMAD7</scope>
    <scope>FUNCTION</scope>
</reference>
<reference key="17">
    <citation type="journal article" date="2011" name="BMC Syst. Biol.">
        <title>Initial characterization of the human central proteome.</title>
        <authorList>
            <person name="Burkard T.R."/>
            <person name="Planyavsky M."/>
            <person name="Kaupe I."/>
            <person name="Breitwieser F.P."/>
            <person name="Buerckstuemmer T."/>
            <person name="Bennett K.L."/>
            <person name="Superti-Furga G."/>
            <person name="Colinge J."/>
        </authorList>
    </citation>
    <scope>IDENTIFICATION BY MASS SPECTROMETRY [LARGE SCALE ANALYSIS]</scope>
</reference>
<reference key="18">
    <citation type="journal article" date="2012" name="Arch. Biochem. Biophys.">
        <title>Characterization of the binding sites for the interactions between FKBP12 and intracellular calcium release channels.</title>
        <authorList>
            <person name="Wen H."/>
            <person name="Kang S."/>
            <person name="Song Y."/>
            <person name="Song Y."/>
            <person name="Yang H.J."/>
            <person name="Kim M.H."/>
            <person name="Park S."/>
        </authorList>
    </citation>
    <scope>INTERACTION WITH RYR3</scope>
</reference>
<reference key="19">
    <citation type="journal article" date="1991" name="Biochemistry">
        <title>Proton and nitrogen sequential assignments and secondary structure determination of the human FK506 and rapamycin binding protein.</title>
        <authorList>
            <person name="Rosen M.K."/>
            <person name="Michnick S.W."/>
            <person name="Karplus M."/>
            <person name="Schreiber S.L."/>
        </authorList>
    </citation>
    <scope>STRUCTURE BY NMR</scope>
</reference>
<reference key="20">
    <citation type="journal article" date="1991" name="Science">
        <title>Solution structure of FKBP, a rotamase enzyme and receptor for FK506 and rapamycin.</title>
        <authorList>
            <person name="Michnick S.W."/>
            <person name="Rosen M.K."/>
            <person name="Wandless T.J."/>
            <person name="Karplus M."/>
            <person name="Schreiber S.L."/>
        </authorList>
    </citation>
    <scope>STRUCTURE BY NMR</scope>
</reference>
<reference key="21">
    <citation type="journal article" date="1992" name="FEBS Lett.">
        <title>Solution structure of FK506 bound to FKBP-12.</title>
        <authorList>
            <person name="Lepre C.A."/>
            <person name="Thomson J.A."/>
            <person name="Moore J.M."/>
        </authorList>
    </citation>
    <scope>STRUCTURE BY NMR</scope>
</reference>
<reference key="22">
    <citation type="journal article" date="1993" name="Biopolymers">
        <title>1H, 13C, and 15N assignments and secondary structure of the FK506 binding protein when bound to ascomycin.</title>
        <authorList>
            <person name="Xu R.X."/>
            <person name="Nettesheim D."/>
            <person name="Olejniczak E.T."/>
            <person name="Meadows R."/>
            <person name="Gemmecker G."/>
            <person name="Fesik S.W."/>
        </authorList>
    </citation>
    <scope>STRUCTURE BY NMR OF COMPLEX WITH ASCOMYCIN</scope>
</reference>
<reference key="23">
    <citation type="journal article" date="1991" name="Science">
        <title>Atomic structure of FKBP-FK506, an immunophilin-immunosuppressant complex.</title>
        <authorList>
            <person name="van Duyne G.D."/>
            <person name="Standaert R.F."/>
            <person name="Karplus P.A."/>
            <person name="Schreiber S.L."/>
            <person name="Clardy J."/>
        </authorList>
    </citation>
    <scope>X-RAY CRYSTALLOGRAPHY (1.7 ANGSTROMS)</scope>
</reference>
<reference key="24">
    <citation type="journal article" date="1991" name="J. Am. Chem. Soc.">
        <title>Atomic structure of the rapamycin human immunophilin FKBP-12 complex.</title>
        <authorList>
            <person name="van Duyne G.D."/>
            <person name="Standaert R.F."/>
            <person name="Schreiber S.L."/>
            <person name="Clardy J."/>
        </authorList>
    </citation>
    <scope>X-RAY CRYSTALLOGRAPHY (1.7 ANGSTROMS)</scope>
</reference>
<reference key="25">
    <citation type="journal article" date="1993" name="J. Mol. Biol.">
        <title>Atomic structures of the human immunophilin FKBP-12 complexes with FK506 and rapamycin.</title>
        <authorList>
            <person name="van Duyne G.D."/>
            <person name="Standaert R.F."/>
            <person name="Karplus P.A."/>
            <person name="Schreiber S.L."/>
            <person name="Clardy J."/>
        </authorList>
    </citation>
    <scope>X-RAY CRYSTALLOGRAPHY (1.4 ANGSTROMS)</scope>
</reference>
<reference key="26">
    <citation type="journal article" date="1999" name="Cell">
        <title>Crystal structure of the cytoplasmic domain of the type I TGF beta receptor in complex with FKBP12.</title>
        <authorList>
            <person name="Huse M."/>
            <person name="Chen Y.-G."/>
            <person name="Massague J."/>
            <person name="Kuriyan J."/>
        </authorList>
    </citation>
    <scope>X-RAY CRYSTALLOGRAPHY (2.60 ANGSTROMS) OF 2-107 IN COMPLEX WITH TGFBR1</scope>
</reference>
<reference key="27">
    <citation type="journal article" date="2000" name="J. Mol. Biol.">
        <title>X-ray structures of small ligand-FKBP complexes provide an estimate for hydrophobic interaction energies.</title>
        <authorList>
            <person name="Burkhard P."/>
            <person name="Taylor P."/>
            <person name="Walkinshaw M.D."/>
        </authorList>
    </citation>
    <scope>X-RAY CRYSTALLOGRAPHY (1.85 ANGSTROMS)</scope>
</reference>
<dbReference type="EC" id="5.2.1.8" evidence="8 9"/>
<dbReference type="EMBL" id="M34539">
    <property type="protein sequence ID" value="AAA35844.1"/>
    <property type="molecule type" value="mRNA"/>
</dbReference>
<dbReference type="EMBL" id="M92423">
    <property type="protein sequence ID" value="AAA58476.1"/>
    <property type="molecule type" value="Genomic_DNA"/>
</dbReference>
<dbReference type="EMBL" id="M92422">
    <property type="protein sequence ID" value="AAA58476.1"/>
    <property type="status" value="JOINED"/>
    <property type="molecule type" value="Genomic_DNA"/>
</dbReference>
<dbReference type="EMBL" id="M93060">
    <property type="status" value="NOT_ANNOTATED_CDS"/>
    <property type="molecule type" value="Genomic_DNA"/>
</dbReference>
<dbReference type="EMBL" id="X55741">
    <property type="protein sequence ID" value="CAA39272.1"/>
    <property type="molecule type" value="Genomic_DNA"/>
</dbReference>
<dbReference type="EMBL" id="M80199">
    <property type="protein sequence ID" value="AAA58472.1"/>
    <property type="molecule type" value="Genomic_DNA"/>
</dbReference>
<dbReference type="EMBL" id="X52220">
    <property type="protein sequence ID" value="CAA36462.1"/>
    <property type="molecule type" value="mRNA"/>
</dbReference>
<dbReference type="EMBL" id="BT007066">
    <property type="protein sequence ID" value="AAP35729.1"/>
    <property type="molecule type" value="mRNA"/>
</dbReference>
<dbReference type="EMBL" id="CR407613">
    <property type="protein sequence ID" value="CAG28541.1"/>
    <property type="molecule type" value="mRNA"/>
</dbReference>
<dbReference type="EMBL" id="CR542168">
    <property type="protein sequence ID" value="CAG46965.1"/>
    <property type="molecule type" value="mRNA"/>
</dbReference>
<dbReference type="EMBL" id="AL136531">
    <property type="status" value="NOT_ANNOTATED_CDS"/>
    <property type="molecule type" value="Genomic_DNA"/>
</dbReference>
<dbReference type="EMBL" id="AL109658">
    <property type="status" value="NOT_ANNOTATED_CDS"/>
    <property type="molecule type" value="Genomic_DNA"/>
</dbReference>
<dbReference type="EMBL" id="CH471133">
    <property type="protein sequence ID" value="EAX10633.1"/>
    <property type="molecule type" value="Genomic_DNA"/>
</dbReference>
<dbReference type="EMBL" id="CH471133">
    <property type="protein sequence ID" value="EAX10634.1"/>
    <property type="molecule type" value="Genomic_DNA"/>
</dbReference>
<dbReference type="EMBL" id="CH471133">
    <property type="protein sequence ID" value="EAX10635.1"/>
    <property type="molecule type" value="Genomic_DNA"/>
</dbReference>
<dbReference type="EMBL" id="BC001925">
    <property type="protein sequence ID" value="AAH01925.3"/>
    <property type="molecule type" value="mRNA"/>
</dbReference>
<dbReference type="EMBL" id="BC005147">
    <property type="protein sequence ID" value="AAH05147.1"/>
    <property type="molecule type" value="mRNA"/>
</dbReference>
<dbReference type="CCDS" id="CCDS13014.1"/>
<dbReference type="PIR" id="I65284">
    <property type="entry name" value="A35780"/>
</dbReference>
<dbReference type="RefSeq" id="NP_000792.1">
    <property type="nucleotide sequence ID" value="NM_000801.5"/>
</dbReference>
<dbReference type="RefSeq" id="NP_463460.1">
    <property type="nucleotide sequence ID" value="NM_054014.4"/>
</dbReference>
<dbReference type="PDB" id="1A7X">
    <property type="method" value="X-ray"/>
    <property type="resolution" value="2.00 A"/>
    <property type="chains" value="A/B=2-108"/>
</dbReference>
<dbReference type="PDB" id="1B6C">
    <property type="method" value="X-ray"/>
    <property type="resolution" value="2.60 A"/>
    <property type="chains" value="A/C/E/G=2-108"/>
</dbReference>
<dbReference type="PDB" id="1BKF">
    <property type="method" value="X-ray"/>
    <property type="resolution" value="1.60 A"/>
    <property type="chains" value="A=2-108"/>
</dbReference>
<dbReference type="PDB" id="1BL4">
    <property type="method" value="X-ray"/>
    <property type="resolution" value="1.90 A"/>
    <property type="chains" value="A/B=2-108"/>
</dbReference>
<dbReference type="PDB" id="1D6O">
    <property type="method" value="X-ray"/>
    <property type="resolution" value="1.85 A"/>
    <property type="chains" value="A/B=2-108"/>
</dbReference>
<dbReference type="PDB" id="1D7H">
    <property type="method" value="X-ray"/>
    <property type="resolution" value="1.90 A"/>
    <property type="chains" value="A/B=2-108"/>
</dbReference>
<dbReference type="PDB" id="1D7I">
    <property type="method" value="X-ray"/>
    <property type="resolution" value="1.90 A"/>
    <property type="chains" value="A/B=2-108"/>
</dbReference>
<dbReference type="PDB" id="1D7J">
    <property type="method" value="X-ray"/>
    <property type="resolution" value="1.85 A"/>
    <property type="chains" value="A/B=2-108"/>
</dbReference>
<dbReference type="PDB" id="1EYM">
    <property type="method" value="X-ray"/>
    <property type="resolution" value="2.00 A"/>
    <property type="chains" value="A/B=2-108"/>
</dbReference>
<dbReference type="PDB" id="1F40">
    <property type="method" value="NMR"/>
    <property type="chains" value="A=2-108"/>
</dbReference>
<dbReference type="PDB" id="1FAP">
    <property type="method" value="X-ray"/>
    <property type="resolution" value="2.70 A"/>
    <property type="chains" value="A=2-108"/>
</dbReference>
<dbReference type="PDB" id="1FKB">
    <property type="method" value="X-ray"/>
    <property type="resolution" value="1.70 A"/>
    <property type="chains" value="A=2-108"/>
</dbReference>
<dbReference type="PDB" id="1FKD">
    <property type="method" value="X-ray"/>
    <property type="resolution" value="1.72 A"/>
    <property type="chains" value="A=2-108"/>
</dbReference>
<dbReference type="PDB" id="1FKF">
    <property type="method" value="X-ray"/>
    <property type="resolution" value="1.70 A"/>
    <property type="chains" value="A=2-108"/>
</dbReference>
<dbReference type="PDB" id="1FKG">
    <property type="method" value="X-ray"/>
    <property type="resolution" value="2.00 A"/>
    <property type="chains" value="A=2-108"/>
</dbReference>
<dbReference type="PDB" id="1FKH">
    <property type="method" value="X-ray"/>
    <property type="resolution" value="1.95 A"/>
    <property type="chains" value="A=2-108"/>
</dbReference>
<dbReference type="PDB" id="1FKI">
    <property type="method" value="X-ray"/>
    <property type="resolution" value="2.20 A"/>
    <property type="chains" value="A/B=2-108"/>
</dbReference>
<dbReference type="PDB" id="1FKJ">
    <property type="method" value="X-ray"/>
    <property type="resolution" value="1.70 A"/>
    <property type="chains" value="A=2-108"/>
</dbReference>
<dbReference type="PDB" id="1FKR">
    <property type="method" value="NMR"/>
    <property type="chains" value="A=2-108"/>
</dbReference>
<dbReference type="PDB" id="1FKS">
    <property type="method" value="NMR"/>
    <property type="chains" value="A=2-108"/>
</dbReference>
<dbReference type="PDB" id="1FKT">
    <property type="method" value="NMR"/>
    <property type="chains" value="A=2-108"/>
</dbReference>
<dbReference type="PDB" id="1J4H">
    <property type="method" value="X-ray"/>
    <property type="resolution" value="1.80 A"/>
    <property type="chains" value="A=2-108"/>
</dbReference>
<dbReference type="PDB" id="1J4I">
    <property type="method" value="X-ray"/>
    <property type="resolution" value="1.80 A"/>
    <property type="chains" value="A=2-108"/>
</dbReference>
<dbReference type="PDB" id="1J4R">
    <property type="method" value="X-ray"/>
    <property type="resolution" value="1.80 A"/>
    <property type="chains" value="A/B/D=2-108"/>
</dbReference>
<dbReference type="PDB" id="1NSG">
    <property type="method" value="X-ray"/>
    <property type="resolution" value="2.20 A"/>
    <property type="chains" value="A=2-108"/>
</dbReference>
<dbReference type="PDB" id="1QPF">
    <property type="method" value="X-ray"/>
    <property type="resolution" value="2.50 A"/>
    <property type="chains" value="A/D=2-108"/>
</dbReference>
<dbReference type="PDB" id="1QPL">
    <property type="method" value="X-ray"/>
    <property type="resolution" value="2.90 A"/>
    <property type="chains" value="A/C=2-108"/>
</dbReference>
<dbReference type="PDB" id="2DG3">
    <property type="method" value="X-ray"/>
    <property type="resolution" value="1.70 A"/>
    <property type="chains" value="A=2-108"/>
</dbReference>
<dbReference type="PDB" id="2DG4">
    <property type="method" value="X-ray"/>
    <property type="resolution" value="1.70 A"/>
    <property type="chains" value="A=2-108"/>
</dbReference>
<dbReference type="PDB" id="2DG9">
    <property type="method" value="X-ray"/>
    <property type="resolution" value="1.70 A"/>
    <property type="chains" value="A=2-108"/>
</dbReference>
<dbReference type="PDB" id="2FAP">
    <property type="method" value="X-ray"/>
    <property type="resolution" value="2.20 A"/>
    <property type="chains" value="A=2-108"/>
</dbReference>
<dbReference type="PDB" id="2FKE">
    <property type="method" value="X-ray"/>
    <property type="resolution" value="1.72 A"/>
    <property type="chains" value="A=2-108"/>
</dbReference>
<dbReference type="PDB" id="2ND5">
    <property type="method" value="NMR"/>
    <property type="chains" value="A=1-108"/>
</dbReference>
<dbReference type="PDB" id="2PPN">
    <property type="method" value="X-ray"/>
    <property type="resolution" value="0.92 A"/>
    <property type="chains" value="A=2-108"/>
</dbReference>
<dbReference type="PDB" id="2PPO">
    <property type="method" value="X-ray"/>
    <property type="resolution" value="1.29 A"/>
    <property type="chains" value="A=2-108"/>
</dbReference>
<dbReference type="PDB" id="2PPP">
    <property type="method" value="X-ray"/>
    <property type="resolution" value="0.94 A"/>
    <property type="chains" value="A=2-108"/>
</dbReference>
<dbReference type="PDB" id="2RSE">
    <property type="method" value="NMR"/>
    <property type="chains" value="A=2-108"/>
</dbReference>
<dbReference type="PDB" id="3FAP">
    <property type="method" value="X-ray"/>
    <property type="resolution" value="1.85 A"/>
    <property type="chains" value="A=2-108"/>
</dbReference>
<dbReference type="PDB" id="3H9R">
    <property type="method" value="X-ray"/>
    <property type="resolution" value="2.35 A"/>
    <property type="chains" value="B=1-108"/>
</dbReference>
<dbReference type="PDB" id="3MDY">
    <property type="method" value="X-ray"/>
    <property type="resolution" value="2.05 A"/>
    <property type="chains" value="B/D=1-108"/>
</dbReference>
<dbReference type="PDB" id="4DH0">
    <property type="method" value="X-ray"/>
    <property type="resolution" value="2.10 A"/>
    <property type="chains" value="A=2-108"/>
</dbReference>
<dbReference type="PDB" id="4FAP">
    <property type="method" value="X-ray"/>
    <property type="resolution" value="2.80 A"/>
    <property type="chains" value="A=2-108"/>
</dbReference>
<dbReference type="PDB" id="4IPX">
    <property type="method" value="X-ray"/>
    <property type="resolution" value="1.70 A"/>
    <property type="chains" value="A=2-108"/>
</dbReference>
<dbReference type="PDB" id="4N19">
    <property type="method" value="X-ray"/>
    <property type="resolution" value="1.20 A"/>
    <property type="chains" value="A=2-108"/>
</dbReference>
<dbReference type="PDB" id="4ODP">
    <property type="method" value="X-ray"/>
    <property type="resolution" value="1.75 A"/>
    <property type="chains" value="A=85-97"/>
</dbReference>
<dbReference type="PDB" id="4ODQ">
    <property type="method" value="X-ray"/>
    <property type="resolution" value="2.00 A"/>
    <property type="chains" value="A=85-97"/>
</dbReference>
<dbReference type="PDB" id="4ODR">
    <property type="method" value="X-ray"/>
    <property type="resolution" value="1.93 A"/>
    <property type="chains" value="A/B=85-97"/>
</dbReference>
<dbReference type="PDB" id="5I7P">
    <property type="method" value="X-ray"/>
    <property type="resolution" value="2.00 A"/>
    <property type="chains" value="A=2-84, A=98-108"/>
</dbReference>
<dbReference type="PDB" id="5I7Q">
    <property type="method" value="X-ray"/>
    <property type="resolution" value="1.90 A"/>
    <property type="chains" value="A=2-84, A=97-108"/>
</dbReference>
<dbReference type="PDB" id="6I1S">
    <property type="method" value="X-ray"/>
    <property type="resolution" value="1.52 A"/>
    <property type="chains" value="B=1-108"/>
</dbReference>
<dbReference type="PDB" id="6M4U">
    <property type="method" value="X-ray"/>
    <property type="resolution" value="2.20 A"/>
    <property type="chains" value="A/E=1-108"/>
</dbReference>
<dbReference type="PDB" id="6OQA">
    <property type="method" value="X-ray"/>
    <property type="resolution" value="2.20 A"/>
    <property type="chains" value="A/B/E/F=1-108"/>
</dbReference>
<dbReference type="PDB" id="6VCU">
    <property type="method" value="X-ray"/>
    <property type="resolution" value="1.69 A"/>
    <property type="chains" value="A/B/C/D=1-108"/>
</dbReference>
<dbReference type="PDB" id="6YF0">
    <property type="method" value="X-ray"/>
    <property type="resolution" value="1.55 A"/>
    <property type="chains" value="A=2-108"/>
</dbReference>
<dbReference type="PDB" id="6YF1">
    <property type="method" value="X-ray"/>
    <property type="resolution" value="1.12 A"/>
    <property type="chains" value="A=2-108"/>
</dbReference>
<dbReference type="PDB" id="6YF2">
    <property type="method" value="X-ray"/>
    <property type="resolution" value="1.03 A"/>
    <property type="chains" value="A=2-108"/>
</dbReference>
<dbReference type="PDB" id="6YF3">
    <property type="method" value="X-ray"/>
    <property type="resolution" value="1.00 A"/>
    <property type="chains" value="A=2-108"/>
</dbReference>
<dbReference type="PDB" id="7EPD">
    <property type="method" value="EM"/>
    <property type="resolution" value="3.90 A"/>
    <property type="chains" value="A=2-108"/>
</dbReference>
<dbReference type="PDB" id="7U0T">
    <property type="method" value="X-ray"/>
    <property type="resolution" value="2.45 A"/>
    <property type="chains" value="B=2-108"/>
</dbReference>
<dbReference type="PDB" id="7U8D">
    <property type="method" value="X-ray"/>
    <property type="resolution" value="1.39 A"/>
    <property type="chains" value="A/B=2-108"/>
</dbReference>
<dbReference type="PDB" id="8CHI">
    <property type="method" value="X-ray"/>
    <property type="resolution" value="1.70 A"/>
    <property type="chains" value="A/B=2-108"/>
</dbReference>
<dbReference type="PDB" id="8CHJ">
    <property type="method" value="X-ray"/>
    <property type="resolution" value="1.70 A"/>
    <property type="chains" value="A/B/C/D=2-108"/>
</dbReference>
<dbReference type="PDB" id="8CHK">
    <property type="method" value="X-ray"/>
    <property type="resolution" value="1.55 A"/>
    <property type="chains" value="A/B/C=2-108"/>
</dbReference>
<dbReference type="PDB" id="8CHL">
    <property type="method" value="X-ray"/>
    <property type="resolution" value="1.40 A"/>
    <property type="chains" value="A/B=2-108"/>
</dbReference>
<dbReference type="PDB" id="8CHM">
    <property type="method" value="X-ray"/>
    <property type="resolution" value="1.12 A"/>
    <property type="chains" value="A=2-108"/>
</dbReference>
<dbReference type="PDB" id="8ER6">
    <property type="method" value="X-ray"/>
    <property type="resolution" value="2.81 A"/>
    <property type="chains" value="A/C/E=2-108"/>
</dbReference>
<dbReference type="PDB" id="8ER7">
    <property type="method" value="X-ray"/>
    <property type="resolution" value="3.07 A"/>
    <property type="chains" value="A/C/E=2-108"/>
</dbReference>
<dbReference type="PDB" id="8ERA">
    <property type="method" value="EM"/>
    <property type="resolution" value="2.86 A"/>
    <property type="chains" value="B=2-108"/>
</dbReference>
<dbReference type="PDB" id="8JCU">
    <property type="method" value="EM"/>
    <property type="resolution" value="2.80 A"/>
    <property type="chains" value="2=2-108"/>
</dbReference>
<dbReference type="PDB" id="8JCV">
    <property type="method" value="EM"/>
    <property type="resolution" value="3.40 A"/>
    <property type="chains" value="2=18-108"/>
</dbReference>
<dbReference type="PDB" id="8JCW">
    <property type="method" value="EM"/>
    <property type="resolution" value="3.00 A"/>
    <property type="chains" value="2=2-108"/>
</dbReference>
<dbReference type="PDB" id="8JCX">
    <property type="method" value="EM"/>
    <property type="resolution" value="3.00 A"/>
    <property type="chains" value="2=2-108"/>
</dbReference>
<dbReference type="PDB" id="8JCY">
    <property type="method" value="EM"/>
    <property type="resolution" value="2.90 A"/>
    <property type="chains" value="2=2-108"/>
</dbReference>
<dbReference type="PDB" id="8JCZ">
    <property type="method" value="EM"/>
    <property type="resolution" value="3.00 A"/>
    <property type="chains" value="2=2-108"/>
</dbReference>
<dbReference type="PDB" id="8JD0">
    <property type="method" value="EM"/>
    <property type="resolution" value="3.30 A"/>
    <property type="chains" value="2=2-108"/>
</dbReference>
<dbReference type="PDB" id="8JD1">
    <property type="method" value="EM"/>
    <property type="resolution" value="3.70 A"/>
    <property type="chains" value="2=2-108"/>
</dbReference>
<dbReference type="PDB" id="8JD2">
    <property type="method" value="EM"/>
    <property type="resolution" value="2.80 A"/>
    <property type="chains" value="2=2-108"/>
</dbReference>
<dbReference type="PDB" id="8JD4">
    <property type="method" value="EM"/>
    <property type="resolution" value="2.90 A"/>
    <property type="chains" value="2=2-108"/>
</dbReference>
<dbReference type="PDB" id="8JGA">
    <property type="method" value="EM"/>
    <property type="resolution" value="3.68 A"/>
    <property type="chains" value="A=2-108"/>
</dbReference>
<dbReference type="PDB" id="8PDF">
    <property type="method" value="X-ray"/>
    <property type="resolution" value="1.20 A"/>
    <property type="chains" value="A=2-108"/>
</dbReference>
<dbReference type="PDB" id="8POD">
    <property type="method" value="X-ray"/>
    <property type="resolution" value="2.59 A"/>
    <property type="chains" value="B=1-108"/>
</dbReference>
<dbReference type="PDB" id="8PPZ">
    <property type="method" value="X-ray"/>
    <property type="resolution" value="1.85 A"/>
    <property type="chains" value="A=2-108"/>
</dbReference>
<dbReference type="PDB" id="8X6P">
    <property type="method" value="X-ray"/>
    <property type="resolution" value="1.05 A"/>
    <property type="chains" value="A/B=1-108"/>
</dbReference>
<dbReference type="PDB" id="8XI9">
    <property type="method" value="X-ray"/>
    <property type="resolution" value="1.85 A"/>
    <property type="chains" value="A=1-108"/>
</dbReference>
<dbReference type="PDB" id="9CHU">
    <property type="method" value="EM"/>
    <property type="resolution" value="3.49 A"/>
    <property type="chains" value="C=1-108"/>
</dbReference>
<dbReference type="PDB" id="9CHV">
    <property type="method" value="EM"/>
    <property type="resolution" value="3.95 A"/>
    <property type="chains" value="C=1-108"/>
</dbReference>
<dbReference type="PDB" id="9CHX">
    <property type="method" value="EM"/>
    <property type="resolution" value="3.50 A"/>
    <property type="chains" value="C=1-108"/>
</dbReference>
<dbReference type="PDBsum" id="1A7X"/>
<dbReference type="PDBsum" id="1B6C"/>
<dbReference type="PDBsum" id="1BKF"/>
<dbReference type="PDBsum" id="1BL4"/>
<dbReference type="PDBsum" id="1D6O"/>
<dbReference type="PDBsum" id="1D7H"/>
<dbReference type="PDBsum" id="1D7I"/>
<dbReference type="PDBsum" id="1D7J"/>
<dbReference type="PDBsum" id="1EYM"/>
<dbReference type="PDBsum" id="1F40"/>
<dbReference type="PDBsum" id="1FAP"/>
<dbReference type="PDBsum" id="1FKB"/>
<dbReference type="PDBsum" id="1FKD"/>
<dbReference type="PDBsum" id="1FKF"/>
<dbReference type="PDBsum" id="1FKG"/>
<dbReference type="PDBsum" id="1FKH"/>
<dbReference type="PDBsum" id="1FKI"/>
<dbReference type="PDBsum" id="1FKJ"/>
<dbReference type="PDBsum" id="1FKR"/>
<dbReference type="PDBsum" id="1FKS"/>
<dbReference type="PDBsum" id="1FKT"/>
<dbReference type="PDBsum" id="1J4H"/>
<dbReference type="PDBsum" id="1J4I"/>
<dbReference type="PDBsum" id="1J4R"/>
<dbReference type="PDBsum" id="1NSG"/>
<dbReference type="PDBsum" id="1QPF"/>
<dbReference type="PDBsum" id="1QPL"/>
<dbReference type="PDBsum" id="2DG3"/>
<dbReference type="PDBsum" id="2DG4"/>
<dbReference type="PDBsum" id="2DG9"/>
<dbReference type="PDBsum" id="2FAP"/>
<dbReference type="PDBsum" id="2FKE"/>
<dbReference type="PDBsum" id="2ND5"/>
<dbReference type="PDBsum" id="2PPN"/>
<dbReference type="PDBsum" id="2PPO"/>
<dbReference type="PDBsum" id="2PPP"/>
<dbReference type="PDBsum" id="2RSE"/>
<dbReference type="PDBsum" id="3FAP"/>
<dbReference type="PDBsum" id="3H9R"/>
<dbReference type="PDBsum" id="3MDY"/>
<dbReference type="PDBsum" id="4DH0"/>
<dbReference type="PDBsum" id="4FAP"/>
<dbReference type="PDBsum" id="4IPX"/>
<dbReference type="PDBsum" id="4N19"/>
<dbReference type="PDBsum" id="4ODP"/>
<dbReference type="PDBsum" id="4ODQ"/>
<dbReference type="PDBsum" id="4ODR"/>
<dbReference type="PDBsum" id="5I7P"/>
<dbReference type="PDBsum" id="5I7Q"/>
<dbReference type="PDBsum" id="6I1S"/>
<dbReference type="PDBsum" id="6M4U"/>
<dbReference type="PDBsum" id="6OQA"/>
<dbReference type="PDBsum" id="6VCU"/>
<dbReference type="PDBsum" id="6YF0"/>
<dbReference type="PDBsum" id="6YF1"/>
<dbReference type="PDBsum" id="6YF2"/>
<dbReference type="PDBsum" id="6YF3"/>
<dbReference type="PDBsum" id="7EPD"/>
<dbReference type="PDBsum" id="7U0T"/>
<dbReference type="PDBsum" id="7U8D"/>
<dbReference type="PDBsum" id="8CHI"/>
<dbReference type="PDBsum" id="8CHJ"/>
<dbReference type="PDBsum" id="8CHK"/>
<dbReference type="PDBsum" id="8CHL"/>
<dbReference type="PDBsum" id="8CHM"/>
<dbReference type="PDBsum" id="8ER6"/>
<dbReference type="PDBsum" id="8ER7"/>
<dbReference type="PDBsum" id="8ERA"/>
<dbReference type="PDBsum" id="8JCU"/>
<dbReference type="PDBsum" id="8JCV"/>
<dbReference type="PDBsum" id="8JCW"/>
<dbReference type="PDBsum" id="8JCX"/>
<dbReference type="PDBsum" id="8JCY"/>
<dbReference type="PDBsum" id="8JCZ"/>
<dbReference type="PDBsum" id="8JD0"/>
<dbReference type="PDBsum" id="8JD1"/>
<dbReference type="PDBsum" id="8JD2"/>
<dbReference type="PDBsum" id="8JD4"/>
<dbReference type="PDBsum" id="8JGA"/>
<dbReference type="PDBsum" id="8PDF"/>
<dbReference type="PDBsum" id="8POD"/>
<dbReference type="PDBsum" id="8PPZ"/>
<dbReference type="PDBsum" id="8X6P"/>
<dbReference type="PDBsum" id="8XI9"/>
<dbReference type="PDBsum" id="9CHU"/>
<dbReference type="PDBsum" id="9CHV"/>
<dbReference type="PDBsum" id="9CHX"/>
<dbReference type="BMRB" id="P62942"/>
<dbReference type="EMDB" id="EMD-28551"/>
<dbReference type="EMDB" id="EMD-36165"/>
<dbReference type="EMDB" id="EMD-36166"/>
<dbReference type="EMDB" id="EMD-36167"/>
<dbReference type="EMDB" id="EMD-36168"/>
<dbReference type="EMDB" id="EMD-36169"/>
<dbReference type="EMDB" id="EMD-36170"/>
<dbReference type="EMDB" id="EMD-36171"/>
<dbReference type="EMDB" id="EMD-36172"/>
<dbReference type="EMDB" id="EMD-36173"/>
<dbReference type="EMDB" id="EMD-36175"/>
<dbReference type="EMDB" id="EMD-45602"/>
<dbReference type="EMDB" id="EMD-45603"/>
<dbReference type="EMDB" id="EMD-45604"/>
<dbReference type="SMR" id="P62942"/>
<dbReference type="BioGRID" id="108570">
    <property type="interactions" value="115"/>
</dbReference>
<dbReference type="CORUM" id="P62942"/>
<dbReference type="DIP" id="DIP-29710N"/>
<dbReference type="FunCoup" id="P62942">
    <property type="interactions" value="2208"/>
</dbReference>
<dbReference type="IntAct" id="P62942">
    <property type="interactions" value="31"/>
</dbReference>
<dbReference type="MINT" id="P62942"/>
<dbReference type="STRING" id="9606.ENSP00000383003"/>
<dbReference type="BindingDB" id="P62942"/>
<dbReference type="ChEMBL" id="CHEMBL1902"/>
<dbReference type="DrugBank" id="DB08520">
    <property type="generic name" value="(21S)-1AZA-4,4-DIMETHYL-6,19-DIOXA-2,3,7,20-TETRAOXOBICYCLO[19.4.0] PENTACOSANE"/>
</dbReference>
<dbReference type="DrugBank" id="DB04012">
    <property type="generic name" value="(3r)-4-(P-Toluenesulfonyl)-1,4-Thiazane-3-Carboxylicacid-L-Leucine"/>
</dbReference>
<dbReference type="DrugBank" id="DB01712">
    <property type="generic name" value="(3R)-4-(p-toluenesulfonyl)-1,4-thiazane-3-carboxylicacid-L-phenylalanine ethyl ester"/>
</dbReference>
<dbReference type="DrugBank" id="DB04094">
    <property type="generic name" value="4-hydroxybutan-2-one"/>
</dbReference>
<dbReference type="DrugBank" id="DB08597">
    <property type="generic name" value="Dorsomorphin"/>
</dbReference>
<dbReference type="DrugBank" id="DB02888">
    <property type="generic name" value="FKB-001"/>
</dbReference>
<dbReference type="DrugBank" id="DB01951">
    <property type="generic name" value="Gpi-1046"/>
</dbReference>
<dbReference type="DrugBank" id="DB05814">
    <property type="generic name" value="GPI-1485"/>
</dbReference>
<dbReference type="DrugBank" id="DB03338">
    <property type="generic name" value="Heptyl glucoside"/>
</dbReference>
<dbReference type="DrugBank" id="DB03621">
    <property type="generic name" value="L-709,587"/>
</dbReference>
<dbReference type="DrugBank" id="DB02311">
    <property type="generic name" value="Methyl Methylsulfinylmethyl Sulfide"/>
</dbReference>
<dbReference type="DrugBank" id="DB08231">
    <property type="generic name" value="Myristic acid"/>
</dbReference>
<dbReference type="DrugBank" id="DB00337">
    <property type="generic name" value="Pimecrolimus"/>
</dbReference>
<dbReference type="DrugBank" id="DB04974">
    <property type="generic name" value="Rimiducid"/>
</dbReference>
<dbReference type="DrugBank" id="DB00864">
    <property type="generic name" value="Tacrolimus"/>
</dbReference>
<dbReference type="DrugBank" id="DB01723">
    <property type="generic name" value="{3-[3-(3,4-Dimethoxy-Phenyl)-1-(1-{1-[2-(3,4,5-Trimethoxy-Phenyl)-Butyryl]-Piperidin-2yl}-Vinyloxy)-Propyl]-Phenoxy}-Acetic Acid"/>
</dbReference>
<dbReference type="DrugCentral" id="P62942"/>
<dbReference type="GuidetoPHARMACOLOGY" id="2609"/>
<dbReference type="TCDB" id="8.A.11.1.2">
    <property type="family name" value="the immunophilin-like prolyl:peptidyl isomerase regulator (i-ppi) family"/>
</dbReference>
<dbReference type="GlyGen" id="P62942">
    <property type="glycosylation" value="1 site, 1 O-linked glycan (1 site)"/>
</dbReference>
<dbReference type="iPTMnet" id="P62942"/>
<dbReference type="MetOSite" id="P62942"/>
<dbReference type="PhosphoSitePlus" id="P62942"/>
<dbReference type="SwissPalm" id="P62942"/>
<dbReference type="BioMuta" id="FKBP1A"/>
<dbReference type="jPOST" id="P62942"/>
<dbReference type="MassIVE" id="P62942"/>
<dbReference type="PaxDb" id="9606-ENSP00000383003"/>
<dbReference type="PeptideAtlas" id="P62942"/>
<dbReference type="ProteomicsDB" id="57456"/>
<dbReference type="Pumba" id="P62942"/>
<dbReference type="TopDownProteomics" id="P62942"/>
<dbReference type="Antibodypedia" id="23072">
    <property type="antibodies" value="416 antibodies from 39 providers"/>
</dbReference>
<dbReference type="DNASU" id="2280"/>
<dbReference type="Ensembl" id="ENST00000381719.8">
    <property type="protein sequence ID" value="ENSP00000371138.3"/>
    <property type="gene ID" value="ENSG00000088832.18"/>
</dbReference>
<dbReference type="Ensembl" id="ENST00000381724.8">
    <property type="protein sequence ID" value="ENSP00000371143.4"/>
    <property type="gene ID" value="ENSG00000088832.18"/>
</dbReference>
<dbReference type="Ensembl" id="ENST00000400137.9">
    <property type="protein sequence ID" value="ENSP00000383003.4"/>
    <property type="gene ID" value="ENSG00000088832.18"/>
</dbReference>
<dbReference type="Ensembl" id="ENST00000677335.1">
    <property type="protein sequence ID" value="ENSP00000503033.1"/>
    <property type="gene ID" value="ENSG00000088832.18"/>
</dbReference>
<dbReference type="Ensembl" id="ENST00000678408.1">
    <property type="protein sequence ID" value="ENSP00000503152.1"/>
    <property type="gene ID" value="ENSG00000088832.18"/>
</dbReference>
<dbReference type="GeneID" id="2280"/>
<dbReference type="KEGG" id="hsa:2280"/>
<dbReference type="MANE-Select" id="ENST00000400137.9">
    <property type="protein sequence ID" value="ENSP00000383003.4"/>
    <property type="RefSeq nucleotide sequence ID" value="NM_000801.5"/>
    <property type="RefSeq protein sequence ID" value="NP_000792.1"/>
</dbReference>
<dbReference type="UCSC" id="uc002wey.4">
    <property type="organism name" value="human"/>
</dbReference>
<dbReference type="AGR" id="HGNC:3711"/>
<dbReference type="CTD" id="2280"/>
<dbReference type="DisGeNET" id="2280"/>
<dbReference type="GeneCards" id="FKBP1A"/>
<dbReference type="HGNC" id="HGNC:3711">
    <property type="gene designation" value="FKBP1A"/>
</dbReference>
<dbReference type="HPA" id="ENSG00000088832">
    <property type="expression patterns" value="Low tissue specificity"/>
</dbReference>
<dbReference type="MIM" id="186945">
    <property type="type" value="gene"/>
</dbReference>
<dbReference type="neXtProt" id="NX_P62942"/>
<dbReference type="OpenTargets" id="ENSG00000088832"/>
<dbReference type="PharmGKB" id="PA28153"/>
<dbReference type="VEuPathDB" id="HostDB:ENSG00000088832"/>
<dbReference type="eggNOG" id="KOG0544">
    <property type="taxonomic scope" value="Eukaryota"/>
</dbReference>
<dbReference type="GeneTree" id="ENSGT00940000153311"/>
<dbReference type="HOGENOM" id="CLU_013615_12_1_1"/>
<dbReference type="InParanoid" id="P62942"/>
<dbReference type="OMA" id="FTSMNNQ"/>
<dbReference type="OrthoDB" id="1902587at2759"/>
<dbReference type="PAN-GO" id="P62942">
    <property type="GO annotations" value="4 GO annotations based on evolutionary models"/>
</dbReference>
<dbReference type="PhylomeDB" id="P62942"/>
<dbReference type="TreeFam" id="TF105291"/>
<dbReference type="BRENDA" id="5.2.1.8">
    <property type="organism ID" value="2681"/>
</dbReference>
<dbReference type="PathwayCommons" id="P62942"/>
<dbReference type="Reactome" id="R-HSA-166208">
    <property type="pathway name" value="mTORC1-mediated signalling"/>
</dbReference>
<dbReference type="Reactome" id="R-HSA-2025928">
    <property type="pathway name" value="Calcineurin activates NFAT"/>
</dbReference>
<dbReference type="Reactome" id="R-HSA-2173789">
    <property type="pathway name" value="TGF-beta receptor signaling activates SMADs"/>
</dbReference>
<dbReference type="Reactome" id="R-HSA-2173791">
    <property type="pathway name" value="TGF-beta receptor signaling in EMT (epithelial to mesenchymal transition)"/>
</dbReference>
<dbReference type="Reactome" id="R-HSA-3656535">
    <property type="pathway name" value="TGFBR1 LBD Mutants in Cancer"/>
</dbReference>
<dbReference type="Reactome" id="R-HSA-9679191">
    <property type="pathway name" value="Potential therapeutics for SARS"/>
</dbReference>
<dbReference type="Reactome" id="R-HSA-9692916">
    <property type="pathway name" value="SARS-CoV-1 activates/modulates innate immune responses"/>
</dbReference>
<dbReference type="SignaLink" id="P62942"/>
<dbReference type="SIGNOR" id="P62942"/>
<dbReference type="BioGRID-ORCS" id="2280">
    <property type="hits" value="244 hits in 1072 CRISPR screens"/>
</dbReference>
<dbReference type="ChiTaRS" id="FKBP1A">
    <property type="organism name" value="human"/>
</dbReference>
<dbReference type="EvolutionaryTrace" id="P62942"/>
<dbReference type="GeneWiki" id="FKBP1A"/>
<dbReference type="GenomeRNAi" id="2280"/>
<dbReference type="Pharos" id="P62942">
    <property type="development level" value="Tclin"/>
</dbReference>
<dbReference type="PRO" id="PR:P62942"/>
<dbReference type="Proteomes" id="UP000005640">
    <property type="component" value="Chromosome 20"/>
</dbReference>
<dbReference type="RNAct" id="P62942">
    <property type="molecule type" value="protein"/>
</dbReference>
<dbReference type="Bgee" id="ENSG00000088832">
    <property type="expression patterns" value="Expressed in right lung and 205 other cell types or tissues"/>
</dbReference>
<dbReference type="ExpressionAtlas" id="P62942">
    <property type="expression patterns" value="baseline and differential"/>
</dbReference>
<dbReference type="GO" id="GO:0005737">
    <property type="term" value="C:cytoplasm"/>
    <property type="evidence" value="ECO:0000314"/>
    <property type="project" value="BHF-UCL"/>
</dbReference>
<dbReference type="GO" id="GO:0098562">
    <property type="term" value="C:cytoplasmic side of membrane"/>
    <property type="evidence" value="ECO:0000250"/>
    <property type="project" value="UniProtKB"/>
</dbReference>
<dbReference type="GO" id="GO:0005829">
    <property type="term" value="C:cytosol"/>
    <property type="evidence" value="ECO:0000314"/>
    <property type="project" value="BHF-UCL"/>
</dbReference>
<dbReference type="GO" id="GO:0016020">
    <property type="term" value="C:membrane"/>
    <property type="evidence" value="ECO:0000314"/>
    <property type="project" value="BHF-UCL"/>
</dbReference>
<dbReference type="GO" id="GO:1990425">
    <property type="term" value="C:ryanodine receptor complex"/>
    <property type="evidence" value="ECO:0000250"/>
    <property type="project" value="UniProtKB"/>
</dbReference>
<dbReference type="GO" id="GO:0016529">
    <property type="term" value="C:sarcoplasmic reticulum"/>
    <property type="evidence" value="ECO:0000250"/>
    <property type="project" value="UniProtKB"/>
</dbReference>
<dbReference type="GO" id="GO:0033017">
    <property type="term" value="C:sarcoplasmic reticulum membrane"/>
    <property type="evidence" value="ECO:0000318"/>
    <property type="project" value="GO_Central"/>
</dbReference>
<dbReference type="GO" id="GO:0014802">
    <property type="term" value="C:terminal cisterna"/>
    <property type="evidence" value="ECO:0000250"/>
    <property type="project" value="BHF-UCL"/>
</dbReference>
<dbReference type="GO" id="GO:0030018">
    <property type="term" value="C:Z disc"/>
    <property type="evidence" value="ECO:0000314"/>
    <property type="project" value="BHF-UCL"/>
</dbReference>
<dbReference type="GO" id="GO:0070697">
    <property type="term" value="F:activin receptor binding"/>
    <property type="evidence" value="ECO:0000353"/>
    <property type="project" value="BHF-UCL"/>
</dbReference>
<dbReference type="GO" id="GO:0005246">
    <property type="term" value="F:calcium channel regulator activity"/>
    <property type="evidence" value="ECO:0000314"/>
    <property type="project" value="BHF-UCL"/>
</dbReference>
<dbReference type="GO" id="GO:0005528">
    <property type="term" value="F:FK506 binding"/>
    <property type="evidence" value="ECO:0000314"/>
    <property type="project" value="BHF-UCL"/>
</dbReference>
<dbReference type="GO" id="GO:0070411">
    <property type="term" value="F:I-SMAD binding"/>
    <property type="evidence" value="ECO:0000353"/>
    <property type="project" value="BHF-UCL"/>
</dbReference>
<dbReference type="GO" id="GO:0005527">
    <property type="term" value="F:macrolide binding"/>
    <property type="evidence" value="ECO:0000303"/>
    <property type="project" value="BHF-UCL"/>
</dbReference>
<dbReference type="GO" id="GO:0003755">
    <property type="term" value="F:peptidyl-prolyl cis-trans isomerase activity"/>
    <property type="evidence" value="ECO:0000314"/>
    <property type="project" value="BHF-UCL"/>
</dbReference>
<dbReference type="GO" id="GO:0030547">
    <property type="term" value="F:signaling receptor inhibitor activity"/>
    <property type="evidence" value="ECO:0000314"/>
    <property type="project" value="BHF-UCL"/>
</dbReference>
<dbReference type="GO" id="GO:0005160">
    <property type="term" value="F:transforming growth factor beta receptor binding"/>
    <property type="evidence" value="ECO:0000250"/>
    <property type="project" value="BHF-UCL"/>
</dbReference>
<dbReference type="GO" id="GO:0044325">
    <property type="term" value="F:transmembrane transporter binding"/>
    <property type="evidence" value="ECO:0000250"/>
    <property type="project" value="BHF-UCL"/>
</dbReference>
<dbReference type="GO" id="GO:0034713">
    <property type="term" value="F:type I transforming growth factor beta receptor binding"/>
    <property type="evidence" value="ECO:0000353"/>
    <property type="project" value="FlyBase"/>
</dbReference>
<dbReference type="GO" id="GO:0006458">
    <property type="term" value="P:'de novo' protein folding"/>
    <property type="evidence" value="ECO:0000304"/>
    <property type="project" value="BHF-UCL"/>
</dbReference>
<dbReference type="GO" id="GO:1990000">
    <property type="term" value="P:amyloid fibril formation"/>
    <property type="evidence" value="ECO:0000314"/>
    <property type="project" value="BHF-UCL"/>
</dbReference>
<dbReference type="GO" id="GO:0003007">
    <property type="term" value="P:heart morphogenesis"/>
    <property type="evidence" value="ECO:0000250"/>
    <property type="project" value="BHF-UCL"/>
</dbReference>
<dbReference type="GO" id="GO:0060347">
    <property type="term" value="P:heart trabecula formation"/>
    <property type="evidence" value="ECO:0000250"/>
    <property type="project" value="BHF-UCL"/>
</dbReference>
<dbReference type="GO" id="GO:0032926">
    <property type="term" value="P:negative regulation of activin receptor signaling pathway"/>
    <property type="evidence" value="ECO:0000314"/>
    <property type="project" value="BHF-UCL"/>
</dbReference>
<dbReference type="GO" id="GO:0030512">
    <property type="term" value="P:negative regulation of transforming growth factor beta receptor signaling pathway"/>
    <property type="evidence" value="ECO:0000314"/>
    <property type="project" value="FlyBase"/>
</dbReference>
<dbReference type="GO" id="GO:0043123">
    <property type="term" value="P:positive regulation of canonical NF-kappaB signal transduction"/>
    <property type="evidence" value="ECO:0007001"/>
    <property type="project" value="UniProtKB"/>
</dbReference>
<dbReference type="GO" id="GO:0006457">
    <property type="term" value="P:protein folding"/>
    <property type="evidence" value="ECO:0000303"/>
    <property type="project" value="UniProtKB"/>
</dbReference>
<dbReference type="GO" id="GO:0051604">
    <property type="term" value="P:protein maturation"/>
    <property type="evidence" value="ECO:0000304"/>
    <property type="project" value="BHF-UCL"/>
</dbReference>
<dbReference type="GO" id="GO:0042026">
    <property type="term" value="P:protein refolding"/>
    <property type="evidence" value="ECO:0000304"/>
    <property type="project" value="BHF-UCL"/>
</dbReference>
<dbReference type="GO" id="GO:1902991">
    <property type="term" value="P:regulation of amyloid precursor protein catabolic process"/>
    <property type="evidence" value="ECO:0000316"/>
    <property type="project" value="ParkinsonsUK-UCL"/>
</dbReference>
<dbReference type="GO" id="GO:0050776">
    <property type="term" value="P:regulation of immune response"/>
    <property type="evidence" value="ECO:0000315"/>
    <property type="project" value="BHF-UCL"/>
</dbReference>
<dbReference type="GO" id="GO:0032880">
    <property type="term" value="P:regulation of protein localization"/>
    <property type="evidence" value="ECO:0000316"/>
    <property type="project" value="ParkinsonsUK-UCL"/>
</dbReference>
<dbReference type="GO" id="GO:0060314">
    <property type="term" value="P:regulation of ryanodine-sensitive calcium-release channel activity"/>
    <property type="evidence" value="ECO:0000250"/>
    <property type="project" value="BHF-UCL"/>
</dbReference>
<dbReference type="GO" id="GO:0014809">
    <property type="term" value="P:regulation of skeletal muscle contraction by regulation of release of sequestered calcium ion"/>
    <property type="evidence" value="ECO:0000314"/>
    <property type="project" value="BHF-UCL"/>
</dbReference>
<dbReference type="GO" id="GO:0097435">
    <property type="term" value="P:supramolecular fiber organization"/>
    <property type="evidence" value="ECO:0000314"/>
    <property type="project" value="BHF-UCL"/>
</dbReference>
<dbReference type="GO" id="GO:0042110">
    <property type="term" value="P:T cell activation"/>
    <property type="evidence" value="ECO:0000303"/>
    <property type="project" value="BHF-UCL"/>
</dbReference>
<dbReference type="GO" id="GO:0055010">
    <property type="term" value="P:ventricular cardiac muscle tissue morphogenesis"/>
    <property type="evidence" value="ECO:0000250"/>
    <property type="project" value="BHF-UCL"/>
</dbReference>
<dbReference type="FunFam" id="3.10.50.40:FF:000024">
    <property type="entry name" value="Peptidyl-prolyl cis-trans isomerase FKBP1A"/>
    <property type="match status" value="1"/>
</dbReference>
<dbReference type="Gene3D" id="3.10.50.40">
    <property type="match status" value="1"/>
</dbReference>
<dbReference type="InterPro" id="IPR050689">
    <property type="entry name" value="FKBP-type_PPIase"/>
</dbReference>
<dbReference type="InterPro" id="IPR046357">
    <property type="entry name" value="PPIase_dom_sf"/>
</dbReference>
<dbReference type="InterPro" id="IPR001179">
    <property type="entry name" value="PPIase_FKBP_dom"/>
</dbReference>
<dbReference type="PANTHER" id="PTHR10516">
    <property type="entry name" value="PEPTIDYL-PROLYL CIS-TRANS ISOMERASE"/>
    <property type="match status" value="1"/>
</dbReference>
<dbReference type="PANTHER" id="PTHR10516:SF301">
    <property type="entry name" value="PEPTIDYL-PROLYL CIS-TRANS ISOMERASE FKBP1A-RELATED"/>
    <property type="match status" value="1"/>
</dbReference>
<dbReference type="Pfam" id="PF00254">
    <property type="entry name" value="FKBP_C"/>
    <property type="match status" value="1"/>
</dbReference>
<dbReference type="SUPFAM" id="SSF54534">
    <property type="entry name" value="FKBP-like"/>
    <property type="match status" value="1"/>
</dbReference>
<dbReference type="PROSITE" id="PS50059">
    <property type="entry name" value="FKBP_PPIASE"/>
    <property type="match status" value="1"/>
</dbReference>
<gene>
    <name type="primary">FKBP1A</name>
    <name type="synonym">FKBP1</name>
    <name type="synonym">FKBP12</name>
</gene>
<evidence type="ECO:0000250" key="1">
    <source>
        <dbReference type="UniProtKB" id="P26883"/>
    </source>
</evidence>
<evidence type="ECO:0000250" key="2">
    <source>
        <dbReference type="UniProtKB" id="P62943"/>
    </source>
</evidence>
<evidence type="ECO:0000255" key="3">
    <source>
        <dbReference type="PROSITE-ProRule" id="PRU00277"/>
    </source>
</evidence>
<evidence type="ECO:0000269" key="4">
    <source>
    </source>
</evidence>
<evidence type="ECO:0000269" key="5">
    <source>
    </source>
</evidence>
<evidence type="ECO:0000269" key="6">
    <source>
    </source>
</evidence>
<evidence type="ECO:0000269" key="7">
    <source>
    </source>
</evidence>
<evidence type="ECO:0000269" key="8">
    <source>
    </source>
</evidence>
<evidence type="ECO:0000269" key="9">
    <source>
    </source>
</evidence>
<evidence type="ECO:0000269" key="10">
    <source>
    </source>
</evidence>
<evidence type="ECO:0000269" key="11">
    <source>
    </source>
</evidence>
<evidence type="ECO:0000269" key="12">
    <source>
    </source>
</evidence>
<evidence type="ECO:0000269" key="13">
    <source>
    </source>
</evidence>
<evidence type="ECO:0000305" key="14"/>
<evidence type="ECO:0007829" key="15">
    <source>
        <dbReference type="PDB" id="2PPN"/>
    </source>
</evidence>
<evidence type="ECO:0007829" key="16">
    <source>
        <dbReference type="PDB" id="7U8D"/>
    </source>
</evidence>
<evidence type="ECO:0007829" key="17">
    <source>
        <dbReference type="PDB" id="8ER7"/>
    </source>
</evidence>
<accession>P62942</accession>
<accession>D3DVW6</accession>
<accession>P20071</accession>
<accession>Q4VC47</accession>
<accession>Q6FGD9</accession>
<accession>Q6LEU3</accession>
<accession>Q9H103</accession>
<accession>Q9H566</accession>
<feature type="initiator methionine" description="Removed" evidence="6 9 11">
    <location>
        <position position="1"/>
    </location>
</feature>
<feature type="chain" id="PRO_0000075289" description="Peptidyl-prolyl cis-trans isomerase FKBP1A">
    <location>
        <begin position="2"/>
        <end position="108"/>
    </location>
</feature>
<feature type="domain" description="PPIase FKBP-type" evidence="3">
    <location>
        <begin position="20"/>
        <end position="108"/>
    </location>
</feature>
<feature type="modified residue" description="N6-acetyllysine; alternate" evidence="1">
    <location>
        <position position="53"/>
    </location>
</feature>
<feature type="modified residue" description="N6-succinyllysine; alternate" evidence="1">
    <location>
        <position position="53"/>
    </location>
</feature>
<feature type="sequence conflict" description="In Ref. 6; CAG28541." evidence="14" ref="6">
    <original>W</original>
    <variation>R</variation>
    <location>
        <position position="60"/>
    </location>
</feature>
<feature type="sequence conflict" description="In Ref. 6; CAG28541." evidence="14" ref="6">
    <original>I</original>
    <variation>V</variation>
    <location>
        <position position="91"/>
    </location>
</feature>
<feature type="strand" evidence="15">
    <location>
        <begin position="3"/>
        <end position="9"/>
    </location>
</feature>
<feature type="strand" evidence="15">
    <location>
        <begin position="22"/>
        <end position="31"/>
    </location>
</feature>
<feature type="strand" evidence="17">
    <location>
        <begin position="32"/>
        <end position="34"/>
    </location>
</feature>
<feature type="strand" evidence="15">
    <location>
        <begin position="36"/>
        <end position="39"/>
    </location>
</feature>
<feature type="helix" evidence="15">
    <location>
        <begin position="40"/>
        <end position="43"/>
    </location>
</feature>
<feature type="strand" evidence="15">
    <location>
        <begin position="47"/>
        <end position="50"/>
    </location>
</feature>
<feature type="turn" evidence="16">
    <location>
        <begin position="51"/>
        <end position="53"/>
    </location>
</feature>
<feature type="helix" evidence="15">
    <location>
        <begin position="58"/>
        <end position="64"/>
    </location>
</feature>
<feature type="strand" evidence="15">
    <location>
        <begin position="72"/>
        <end position="77"/>
    </location>
</feature>
<feature type="helix" evidence="15">
    <location>
        <begin position="79"/>
        <end position="81"/>
    </location>
</feature>
<feature type="turn" evidence="15">
    <location>
        <begin position="82"/>
        <end position="86"/>
    </location>
</feature>
<feature type="turn" evidence="15">
    <location>
        <begin position="89"/>
        <end position="91"/>
    </location>
</feature>
<feature type="strand" evidence="15">
    <location>
        <begin position="98"/>
        <end position="108"/>
    </location>
</feature>
<name>FKB1A_HUMAN</name>
<protein>
    <recommendedName>
        <fullName>Peptidyl-prolyl cis-trans isomerase FKBP1A</fullName>
        <shortName>PPIase FKBP1A</shortName>
        <ecNumber evidence="8 9">5.2.1.8</ecNumber>
    </recommendedName>
    <alternativeName>
        <fullName>12 kDa FK506-binding protein</fullName>
        <shortName>12 kDa FKBP</shortName>
        <shortName>FKBP-12</shortName>
    </alternativeName>
    <alternativeName>
        <fullName>Calstabin-1</fullName>
    </alternativeName>
    <alternativeName>
        <fullName>FK506-binding protein 1A</fullName>
        <shortName>FKBP-1A</shortName>
    </alternativeName>
    <alternativeName>
        <fullName>Immunophilin FKBP12</fullName>
    </alternativeName>
    <alternativeName>
        <fullName>Rotamase</fullName>
    </alternativeName>
</protein>